<protein>
    <recommendedName>
        <fullName>Gap junction alpha-8 protein</fullName>
    </recommendedName>
    <alternativeName>
        <fullName>Connexin-50</fullName>
        <shortName>Cx50</shortName>
    </alternativeName>
    <alternativeName>
        <fullName evidence="4">Lens fiber protein MP70</fullName>
    </alternativeName>
</protein>
<gene>
    <name type="primary">Gja8</name>
</gene>
<comment type="function">
    <text evidence="1 3">Structural component of eye lens gap junctions (PubMed:1325220). Gap junctions are dodecameric channels that connect the cytoplasm of adjoining cells. They are formed by the docking of two hexameric hemichannels, one from each cell membrane (By similarity). Small molecules and ions diffuse from one cell to a neighboring cell via the central pore (PubMed:1325220).</text>
</comment>
<comment type="subunit">
    <text evidence="1">A hemichannel or connexon is composed of a hexamer of connexins. A functional gap junction is formed by the apposition of two hemichannels. Forms heteromeric channels with GJA3.</text>
</comment>
<comment type="subcellular location">
    <subcellularLocation>
        <location evidence="3">Cell membrane</location>
        <topology evidence="1">Multi-pass membrane protein</topology>
    </subcellularLocation>
    <subcellularLocation>
        <location evidence="6">Cell junction</location>
        <location evidence="6">Gap junction</location>
    </subcellularLocation>
</comment>
<comment type="tissue specificity">
    <text evidence="3">Detected in eye lens (at protein level). Eye lens.</text>
</comment>
<comment type="similarity">
    <text evidence="5">Belongs to the connexin family. Alpha-type (group II) subfamily.</text>
</comment>
<sequence length="440" mass="49598">MGDWSFLGNILEEVNEHSTVIGRVWLTVLFIFRILILGTAAEFVWGDEQSDFVCNTQQPGCENVCYDEAFPISHIRLWVLQIIFVSTPSLMYVGHAVHHVRMEEKRKDREAEELCQQSRSNGGERVPIAPDQASIRKSSSSSKGTKKFRLEGTLLRTYVCHIIFKTLFEVGFIVGHYFLYGFRILPLYRCSRWPCPNVVDCFVSRPTEKTIFILFMLSVAFVSLFLNIMEMSHLGMKGIRSAFKRPVEQPLGEIAEKSLHSIAVSSIQKAKGYQLLEEEKIVSHYFPLTEVGMVETSPLSAKPFSQFEEKIGTGPLADMSRSYQETLPSYAQVGVQEVEREEPPIEEAVEPEVGEKKQEAEKVAPEGQETVAVPDRERVETPGVGKEDEKEELQAEKVTKQGLSAEKAPSLCPELTTDDNRPLSRLSKASSRARSDDLTI</sequence>
<organism>
    <name type="scientific">Mus musculus</name>
    <name type="common">Mouse</name>
    <dbReference type="NCBI Taxonomy" id="10090"/>
    <lineage>
        <taxon>Eukaryota</taxon>
        <taxon>Metazoa</taxon>
        <taxon>Chordata</taxon>
        <taxon>Craniata</taxon>
        <taxon>Vertebrata</taxon>
        <taxon>Euteleostomi</taxon>
        <taxon>Mammalia</taxon>
        <taxon>Eutheria</taxon>
        <taxon>Euarchontoglires</taxon>
        <taxon>Glires</taxon>
        <taxon>Rodentia</taxon>
        <taxon>Myomorpha</taxon>
        <taxon>Muroidea</taxon>
        <taxon>Muridae</taxon>
        <taxon>Murinae</taxon>
        <taxon>Mus</taxon>
        <taxon>Mus</taxon>
    </lineage>
</organism>
<feature type="initiator methionine" description="Removed" evidence="1">
    <location>
        <position position="1"/>
    </location>
</feature>
<feature type="chain" id="PRO_0000057831" description="Gap junction alpha-8 protein">
    <location>
        <begin position="2"/>
        <end position="440"/>
    </location>
</feature>
<feature type="intramembrane region" evidence="1">
    <location>
        <begin position="2"/>
        <end position="12"/>
    </location>
</feature>
<feature type="topological domain" description="Cytoplasmic" evidence="5">
    <location>
        <begin position="13"/>
        <end position="21"/>
    </location>
</feature>
<feature type="transmembrane region" description="Helical" evidence="1">
    <location>
        <begin position="22"/>
        <end position="42"/>
    </location>
</feature>
<feature type="topological domain" description="Extracellular" evidence="5">
    <location>
        <begin position="43"/>
        <end position="71"/>
    </location>
</feature>
<feature type="transmembrane region" description="Helical" evidence="1">
    <location>
        <begin position="72"/>
        <end position="92"/>
    </location>
</feature>
<feature type="topological domain" description="Cytoplasmic" evidence="5">
    <location>
        <begin position="93"/>
        <end position="161"/>
    </location>
</feature>
<feature type="transmembrane region" description="Helical" evidence="1">
    <location>
        <begin position="162"/>
        <end position="182"/>
    </location>
</feature>
<feature type="topological domain" description="Extracellular" evidence="5">
    <location>
        <begin position="183"/>
        <end position="210"/>
    </location>
</feature>
<feature type="transmembrane region" description="Helical" evidence="1">
    <location>
        <begin position="211"/>
        <end position="231"/>
    </location>
</feature>
<feature type="topological domain" description="Cytoplasmic" evidence="5">
    <location>
        <begin position="232"/>
        <end position="440"/>
    </location>
</feature>
<feature type="region of interest" description="Disordered" evidence="2">
    <location>
        <begin position="111"/>
        <end position="143"/>
    </location>
</feature>
<feature type="region of interest" description="Disordered" evidence="2">
    <location>
        <begin position="338"/>
        <end position="440"/>
    </location>
</feature>
<feature type="compositionally biased region" description="Basic and acidic residues" evidence="2">
    <location>
        <begin position="353"/>
        <end position="364"/>
    </location>
</feature>
<feature type="compositionally biased region" description="Basic and acidic residues" evidence="2">
    <location>
        <begin position="374"/>
        <end position="399"/>
    </location>
</feature>
<feature type="compositionally biased region" description="Low complexity" evidence="2">
    <location>
        <begin position="423"/>
        <end position="432"/>
    </location>
</feature>
<feature type="disulfide bond" evidence="1">
    <location>
        <begin position="54"/>
        <end position="201"/>
    </location>
</feature>
<feature type="disulfide bond" evidence="1">
    <location>
        <begin position="61"/>
        <end position="195"/>
    </location>
</feature>
<feature type="disulfide bond" evidence="1">
    <location>
        <begin position="65"/>
        <end position="190"/>
    </location>
</feature>
<evidence type="ECO:0000250" key="1">
    <source>
        <dbReference type="UniProtKB" id="P55917"/>
    </source>
</evidence>
<evidence type="ECO:0000256" key="2">
    <source>
        <dbReference type="SAM" id="MobiDB-lite"/>
    </source>
</evidence>
<evidence type="ECO:0000269" key="3">
    <source>
    </source>
</evidence>
<evidence type="ECO:0000303" key="4">
    <source>
    </source>
</evidence>
<evidence type="ECO:0000305" key="5"/>
<evidence type="ECO:0000305" key="6">
    <source>
    </source>
</evidence>
<proteinExistence type="evidence at protein level"/>
<reference key="1">
    <citation type="journal article" date="1992" name="Mol. Biol. Cell">
        <title>Mouse Cx50, a functional member of the connexin family of gap junction proteins, is the lens fiber protein MP70.</title>
        <authorList>
            <person name="White T.W."/>
            <person name="Bruzzone R."/>
            <person name="Goodenough D.A."/>
            <person name="Paul D.L."/>
        </authorList>
    </citation>
    <scope>NUCLEOTIDE SEQUENCE [GENOMIC DNA]</scope>
    <scope>FUNCTION</scope>
    <scope>SUBCELLULAR LOCATION</scope>
    <scope>TISSUE SPECIFICITY</scope>
</reference>
<reference key="2">
    <citation type="submission" date="2009-01" db="UniProtKB">
        <authorList>
            <person name="Lubec G."/>
            <person name="Sunyer B."/>
            <person name="Chen W.-Q."/>
        </authorList>
    </citation>
    <scope>PROTEIN SEQUENCE OF 379-390</scope>
    <scope>IDENTIFICATION BY MASS SPECTROMETRY</scope>
    <source>
        <strain>OF1</strain>
        <tissue>Hippocampus</tissue>
    </source>
</reference>
<accession>P28236</accession>
<name>CXA8_MOUSE</name>
<dbReference type="EMBL" id="M91243">
    <property type="protein sequence ID" value="AAA37497.1"/>
    <property type="molecule type" value="Genomic_DNA"/>
</dbReference>
<dbReference type="CCDS" id="CCDS17651.1"/>
<dbReference type="PIR" id="I49624">
    <property type="entry name" value="I49624"/>
</dbReference>
<dbReference type="RefSeq" id="NP_032149.1">
    <property type="nucleotide sequence ID" value="NM_008123.3"/>
</dbReference>
<dbReference type="SMR" id="P28236"/>
<dbReference type="FunCoup" id="P28236">
    <property type="interactions" value="681"/>
</dbReference>
<dbReference type="STRING" id="10090.ENSMUSP00000049532"/>
<dbReference type="PhosphoSitePlus" id="P28236"/>
<dbReference type="PaxDb" id="10090-ENSMUSP00000049532"/>
<dbReference type="ProteomicsDB" id="279243"/>
<dbReference type="Antibodypedia" id="33981">
    <property type="antibodies" value="249 antibodies from 27 providers"/>
</dbReference>
<dbReference type="DNASU" id="14616"/>
<dbReference type="Ensembl" id="ENSMUST00000062944.7">
    <property type="protein sequence ID" value="ENSMUSP00000049532.6"/>
    <property type="gene ID" value="ENSMUSG00000049908.7"/>
</dbReference>
<dbReference type="GeneID" id="14616"/>
<dbReference type="KEGG" id="mmu:14616"/>
<dbReference type="UCSC" id="uc008qon.2">
    <property type="organism name" value="mouse"/>
</dbReference>
<dbReference type="AGR" id="MGI:99953"/>
<dbReference type="CTD" id="2703"/>
<dbReference type="MGI" id="MGI:99953">
    <property type="gene designation" value="Gja8"/>
</dbReference>
<dbReference type="VEuPathDB" id="HostDB:ENSMUSG00000049908"/>
<dbReference type="eggNOG" id="ENOG502QV1K">
    <property type="taxonomic scope" value="Eukaryota"/>
</dbReference>
<dbReference type="GeneTree" id="ENSGT01050000244864"/>
<dbReference type="HOGENOM" id="CLU_037388_0_0_1"/>
<dbReference type="InParanoid" id="P28236"/>
<dbReference type="OMA" id="EKPVSHY"/>
<dbReference type="OrthoDB" id="9941830at2759"/>
<dbReference type="PhylomeDB" id="P28236"/>
<dbReference type="TreeFam" id="TF329606"/>
<dbReference type="Reactome" id="R-MMU-190861">
    <property type="pathway name" value="Gap junction assembly"/>
</dbReference>
<dbReference type="BioGRID-ORCS" id="14616">
    <property type="hits" value="3 hits in 76 CRISPR screens"/>
</dbReference>
<dbReference type="PRO" id="PR:P28236"/>
<dbReference type="Proteomes" id="UP000000589">
    <property type="component" value="Chromosome 3"/>
</dbReference>
<dbReference type="RNAct" id="P28236">
    <property type="molecule type" value="protein"/>
</dbReference>
<dbReference type="Bgee" id="ENSMUSG00000049908">
    <property type="expression patterns" value="Expressed in lens of camera-type eye and 5 other cell types or tissues"/>
</dbReference>
<dbReference type="ExpressionAtlas" id="P28236">
    <property type="expression patterns" value="baseline and differential"/>
</dbReference>
<dbReference type="GO" id="GO:0005922">
    <property type="term" value="C:connexin complex"/>
    <property type="evidence" value="ECO:0000250"/>
    <property type="project" value="UniProtKB"/>
</dbReference>
<dbReference type="GO" id="GO:0005886">
    <property type="term" value="C:plasma membrane"/>
    <property type="evidence" value="ECO:0000314"/>
    <property type="project" value="MGI"/>
</dbReference>
<dbReference type="GO" id="GO:0005243">
    <property type="term" value="F:gap junction channel activity"/>
    <property type="evidence" value="ECO:0000250"/>
    <property type="project" value="UniProtKB"/>
</dbReference>
<dbReference type="GO" id="GO:0043010">
    <property type="term" value="P:camera-type eye development"/>
    <property type="evidence" value="ECO:0000315"/>
    <property type="project" value="MGI"/>
</dbReference>
<dbReference type="GO" id="GO:0007154">
    <property type="term" value="P:cell communication"/>
    <property type="evidence" value="ECO:0007669"/>
    <property type="project" value="InterPro"/>
</dbReference>
<dbReference type="GO" id="GO:1990349">
    <property type="term" value="P:gap junction-mediated intercellular transport"/>
    <property type="evidence" value="ECO:0000250"/>
    <property type="project" value="UniProtKB"/>
</dbReference>
<dbReference type="GO" id="GO:0002088">
    <property type="term" value="P:lens development in camera-type eye"/>
    <property type="evidence" value="ECO:0000315"/>
    <property type="project" value="MGI"/>
</dbReference>
<dbReference type="FunFam" id="1.20.1440.80:FF:000002">
    <property type="entry name" value="Gap junction protein"/>
    <property type="match status" value="1"/>
</dbReference>
<dbReference type="Gene3D" id="1.20.1440.80">
    <property type="entry name" value="Gap junction channel protein cysteine-rich domain"/>
    <property type="match status" value="1"/>
</dbReference>
<dbReference type="InterPro" id="IPR000500">
    <property type="entry name" value="Connexin"/>
</dbReference>
<dbReference type="InterPro" id="IPR002266">
    <property type="entry name" value="Connexin50"/>
</dbReference>
<dbReference type="InterPro" id="IPR019570">
    <property type="entry name" value="Connexin_CCC"/>
</dbReference>
<dbReference type="InterPro" id="IPR017990">
    <property type="entry name" value="Connexin_CS"/>
</dbReference>
<dbReference type="InterPro" id="IPR013092">
    <property type="entry name" value="Connexin_N"/>
</dbReference>
<dbReference type="InterPro" id="IPR038359">
    <property type="entry name" value="Connexin_N_sf"/>
</dbReference>
<dbReference type="PANTHER" id="PTHR11984">
    <property type="entry name" value="CONNEXIN"/>
    <property type="match status" value="1"/>
</dbReference>
<dbReference type="PANTHER" id="PTHR11984:SF19">
    <property type="entry name" value="GAP JUNCTION ALPHA-8 PROTEIN"/>
    <property type="match status" value="1"/>
</dbReference>
<dbReference type="Pfam" id="PF00029">
    <property type="entry name" value="Connexin"/>
    <property type="match status" value="1"/>
</dbReference>
<dbReference type="Pfam" id="PF03509">
    <property type="entry name" value="Connexin50"/>
    <property type="match status" value="1"/>
</dbReference>
<dbReference type="PRINTS" id="PR00206">
    <property type="entry name" value="CONNEXIN"/>
</dbReference>
<dbReference type="PRINTS" id="PR01137">
    <property type="entry name" value="CONNEXINA8"/>
</dbReference>
<dbReference type="SMART" id="SM00037">
    <property type="entry name" value="CNX"/>
    <property type="match status" value="1"/>
</dbReference>
<dbReference type="SMART" id="SM01089">
    <property type="entry name" value="Connexin_CCC"/>
    <property type="match status" value="1"/>
</dbReference>
<dbReference type="PROSITE" id="PS00407">
    <property type="entry name" value="CONNEXINS_1"/>
    <property type="match status" value="1"/>
</dbReference>
<dbReference type="PROSITE" id="PS00408">
    <property type="entry name" value="CONNEXINS_2"/>
    <property type="match status" value="1"/>
</dbReference>
<keyword id="KW-0965">Cell junction</keyword>
<keyword id="KW-1003">Cell membrane</keyword>
<keyword id="KW-0903">Direct protein sequencing</keyword>
<keyword id="KW-1015">Disulfide bond</keyword>
<keyword id="KW-0303">Gap junction</keyword>
<keyword id="KW-0472">Membrane</keyword>
<keyword id="KW-1185">Reference proteome</keyword>
<keyword id="KW-0812">Transmembrane</keyword>
<keyword id="KW-1133">Transmembrane helix</keyword>